<name>CAPP_PECAS</name>
<gene>
    <name evidence="1" type="primary">ppc</name>
    <name type="ordered locus">ECA0187</name>
</gene>
<keyword id="KW-0120">Carbon dioxide fixation</keyword>
<keyword id="KW-0456">Lyase</keyword>
<keyword id="KW-0460">Magnesium</keyword>
<keyword id="KW-1185">Reference proteome</keyword>
<organism>
    <name type="scientific">Pectobacterium atrosepticum (strain SCRI 1043 / ATCC BAA-672)</name>
    <name type="common">Erwinia carotovora subsp. atroseptica</name>
    <dbReference type="NCBI Taxonomy" id="218491"/>
    <lineage>
        <taxon>Bacteria</taxon>
        <taxon>Pseudomonadati</taxon>
        <taxon>Pseudomonadota</taxon>
        <taxon>Gammaproteobacteria</taxon>
        <taxon>Enterobacterales</taxon>
        <taxon>Pectobacteriaceae</taxon>
        <taxon>Pectobacterium</taxon>
    </lineage>
</organism>
<sequence>MNEQYSAMRSNVSMLGTLLGDTIKEALGENILDKVETIRKLSKSSRAGNEKHRQELLTTLQNLSNDELLPVARAFSQFLNLTNTAEQYHTISPHGEAASNPAQLSSAFKRLKESKDLSERDIRDAVESLSIELVLTAHPTEITRRTLIHKLVEVNTCLKQLDHNDLADYERNQVMRRLRQLIAQSWHTDEIRKIRPTPVDEAKWGFAVVENSLWEGVPAFLRELDEQLEQAFGYRLPVDAVPVRFTSWMGGDRDGNPNVTAEVTRHVLLLSRWKAADLFLRDIQVLVSELSMSECTPELLELAGGSEVQEPYRAIMKSLRSQLSCTLSYLEARLTGEERLPPKDLLITNEQLWEPLHACYQSLKTCGMGIIADGSLLDTLRRVRCFGVPLVRIDVRQESTRHTDALAEITRYLGLGDYESWSESDKQAFLIRELSSKRPLLPRYWEPSADTKEVLDTCRVIAKAPQGSIAAYVISMARTPSDVLAVQLLLKEAGCPFALPVAPLFETLDDLNNADDVMTQLLSIDWYRGFIQGKQMVMIGYSDSAKDAGVMAASWAQYRAQDALIKTCEKAGIALTLFHGRGGSIGRGGAPAHAALLSQPPGSLKGGLRVTEQGEMIRFKYGLPDVTISSLALYTGAILEANLLPPPEPKQEWHEVMDELSRVSCDMYRGYVRENPDFVPYFRAATPELELGKLPLGSRPAKRRPNGGVESLRAIPWIFAWTQNRLMLPAWLGAGAGLQKVVDDGKQEQLEEMCRNWPFFSTRIGMLEMVFAKADLWLAEYYDQRLVEEKLWPLGKQLRDQLAADINIVLAISNDDHLMADLPWIAESIALRNVYTDPLNVLQAELLHRSRQQKQPDADLELALMVTIAGVAAGMRNTG</sequence>
<comment type="function">
    <text evidence="1">Forms oxaloacetate, a four-carbon dicarboxylic acid source for the tricarboxylic acid cycle.</text>
</comment>
<comment type="catalytic activity">
    <reaction evidence="1">
        <text>oxaloacetate + phosphate = phosphoenolpyruvate + hydrogencarbonate</text>
        <dbReference type="Rhea" id="RHEA:28370"/>
        <dbReference type="ChEBI" id="CHEBI:16452"/>
        <dbReference type="ChEBI" id="CHEBI:17544"/>
        <dbReference type="ChEBI" id="CHEBI:43474"/>
        <dbReference type="ChEBI" id="CHEBI:58702"/>
        <dbReference type="EC" id="4.1.1.31"/>
    </reaction>
</comment>
<comment type="cofactor">
    <cofactor evidence="1">
        <name>Mg(2+)</name>
        <dbReference type="ChEBI" id="CHEBI:18420"/>
    </cofactor>
</comment>
<comment type="similarity">
    <text evidence="1">Belongs to the PEPCase type 1 family.</text>
</comment>
<reference key="1">
    <citation type="journal article" date="2004" name="Proc. Natl. Acad. Sci. U.S.A.">
        <title>Genome sequence of the enterobacterial phytopathogen Erwinia carotovora subsp. atroseptica and characterization of virulence factors.</title>
        <authorList>
            <person name="Bell K.S."/>
            <person name="Sebaihia M."/>
            <person name="Pritchard L."/>
            <person name="Holden M.T.G."/>
            <person name="Hyman L.J."/>
            <person name="Holeva M.C."/>
            <person name="Thomson N.R."/>
            <person name="Bentley S.D."/>
            <person name="Churcher L.J.C."/>
            <person name="Mungall K."/>
            <person name="Atkin R."/>
            <person name="Bason N."/>
            <person name="Brooks K."/>
            <person name="Chillingworth T."/>
            <person name="Clark K."/>
            <person name="Doggett J."/>
            <person name="Fraser A."/>
            <person name="Hance Z."/>
            <person name="Hauser H."/>
            <person name="Jagels K."/>
            <person name="Moule S."/>
            <person name="Norbertczak H."/>
            <person name="Ormond D."/>
            <person name="Price C."/>
            <person name="Quail M.A."/>
            <person name="Sanders M."/>
            <person name="Walker D."/>
            <person name="Whitehead S."/>
            <person name="Salmond G.P.C."/>
            <person name="Birch P.R.J."/>
            <person name="Parkhill J."/>
            <person name="Toth I.K."/>
        </authorList>
    </citation>
    <scope>NUCLEOTIDE SEQUENCE [LARGE SCALE GENOMIC DNA]</scope>
    <source>
        <strain>SCRI 1043 / ATCC BAA-672</strain>
    </source>
</reference>
<proteinExistence type="inferred from homology"/>
<accession>Q6DAR6</accession>
<feature type="chain" id="PRO_0000166595" description="Phosphoenolpyruvate carboxylase">
    <location>
        <begin position="1"/>
        <end position="879"/>
    </location>
</feature>
<feature type="active site" evidence="1">
    <location>
        <position position="138"/>
    </location>
</feature>
<feature type="active site" evidence="1">
    <location>
        <position position="546"/>
    </location>
</feature>
<dbReference type="EC" id="4.1.1.31" evidence="1"/>
<dbReference type="EMBL" id="BX950851">
    <property type="protein sequence ID" value="CAG73106.1"/>
    <property type="molecule type" value="Genomic_DNA"/>
</dbReference>
<dbReference type="RefSeq" id="WP_011091826.1">
    <property type="nucleotide sequence ID" value="NC_004547.2"/>
</dbReference>
<dbReference type="SMR" id="Q6DAR6"/>
<dbReference type="STRING" id="218491.ECA0187"/>
<dbReference type="GeneID" id="57207044"/>
<dbReference type="KEGG" id="eca:ECA0187"/>
<dbReference type="PATRIC" id="fig|218491.5.peg.186"/>
<dbReference type="eggNOG" id="COG2352">
    <property type="taxonomic scope" value="Bacteria"/>
</dbReference>
<dbReference type="HOGENOM" id="CLU_006557_2_0_6"/>
<dbReference type="OrthoDB" id="9768133at2"/>
<dbReference type="Proteomes" id="UP000007966">
    <property type="component" value="Chromosome"/>
</dbReference>
<dbReference type="GO" id="GO:0005829">
    <property type="term" value="C:cytosol"/>
    <property type="evidence" value="ECO:0007669"/>
    <property type="project" value="TreeGrafter"/>
</dbReference>
<dbReference type="GO" id="GO:0000287">
    <property type="term" value="F:magnesium ion binding"/>
    <property type="evidence" value="ECO:0007669"/>
    <property type="project" value="UniProtKB-UniRule"/>
</dbReference>
<dbReference type="GO" id="GO:0008964">
    <property type="term" value="F:phosphoenolpyruvate carboxylase activity"/>
    <property type="evidence" value="ECO:0007669"/>
    <property type="project" value="UniProtKB-UniRule"/>
</dbReference>
<dbReference type="GO" id="GO:0015977">
    <property type="term" value="P:carbon fixation"/>
    <property type="evidence" value="ECO:0007669"/>
    <property type="project" value="UniProtKB-UniRule"/>
</dbReference>
<dbReference type="GO" id="GO:0006107">
    <property type="term" value="P:oxaloacetate metabolic process"/>
    <property type="evidence" value="ECO:0007669"/>
    <property type="project" value="UniProtKB-UniRule"/>
</dbReference>
<dbReference type="GO" id="GO:0006099">
    <property type="term" value="P:tricarboxylic acid cycle"/>
    <property type="evidence" value="ECO:0007669"/>
    <property type="project" value="InterPro"/>
</dbReference>
<dbReference type="FunFam" id="1.20.1440.90:FF:000002">
    <property type="entry name" value="Phosphoenolpyruvate carboxylase"/>
    <property type="match status" value="1"/>
</dbReference>
<dbReference type="Gene3D" id="1.20.1440.90">
    <property type="entry name" value="Phosphoenolpyruvate/pyruvate domain"/>
    <property type="match status" value="1"/>
</dbReference>
<dbReference type="HAMAP" id="MF_00595">
    <property type="entry name" value="PEPcase_type1"/>
    <property type="match status" value="1"/>
</dbReference>
<dbReference type="InterPro" id="IPR021135">
    <property type="entry name" value="PEP_COase"/>
</dbReference>
<dbReference type="InterPro" id="IPR022805">
    <property type="entry name" value="PEP_COase_bac/pln-type"/>
</dbReference>
<dbReference type="InterPro" id="IPR018129">
    <property type="entry name" value="PEP_COase_Lys_AS"/>
</dbReference>
<dbReference type="InterPro" id="IPR033129">
    <property type="entry name" value="PEPCASE_His_AS"/>
</dbReference>
<dbReference type="InterPro" id="IPR015813">
    <property type="entry name" value="Pyrv/PenolPyrv_kinase-like_dom"/>
</dbReference>
<dbReference type="NCBIfam" id="NF000584">
    <property type="entry name" value="PRK00009.1"/>
    <property type="match status" value="1"/>
</dbReference>
<dbReference type="PANTHER" id="PTHR30523">
    <property type="entry name" value="PHOSPHOENOLPYRUVATE CARBOXYLASE"/>
    <property type="match status" value="1"/>
</dbReference>
<dbReference type="PANTHER" id="PTHR30523:SF6">
    <property type="entry name" value="PHOSPHOENOLPYRUVATE CARBOXYLASE"/>
    <property type="match status" value="1"/>
</dbReference>
<dbReference type="Pfam" id="PF00311">
    <property type="entry name" value="PEPcase"/>
    <property type="match status" value="1"/>
</dbReference>
<dbReference type="PRINTS" id="PR00150">
    <property type="entry name" value="PEPCARBXLASE"/>
</dbReference>
<dbReference type="SUPFAM" id="SSF51621">
    <property type="entry name" value="Phosphoenolpyruvate/pyruvate domain"/>
    <property type="match status" value="1"/>
</dbReference>
<dbReference type="PROSITE" id="PS00781">
    <property type="entry name" value="PEPCASE_1"/>
    <property type="match status" value="1"/>
</dbReference>
<dbReference type="PROSITE" id="PS00393">
    <property type="entry name" value="PEPCASE_2"/>
    <property type="match status" value="1"/>
</dbReference>
<protein>
    <recommendedName>
        <fullName evidence="1">Phosphoenolpyruvate carboxylase</fullName>
        <shortName evidence="1">PEPC</shortName>
        <shortName evidence="1">PEPCase</shortName>
        <ecNumber evidence="1">4.1.1.31</ecNumber>
    </recommendedName>
</protein>
<evidence type="ECO:0000255" key="1">
    <source>
        <dbReference type="HAMAP-Rule" id="MF_00595"/>
    </source>
</evidence>